<protein>
    <recommendedName>
        <fullName>Transcobalamin-2</fullName>
        <shortName>TC-2</shortName>
    </recommendedName>
    <alternativeName>
        <fullName>Transcobalamin II</fullName>
        <shortName>TC II</shortName>
        <shortName>TCII</shortName>
    </alternativeName>
</protein>
<sequence>MELLKALLLLSGVFGALAEFCVIPRIDSQLVEKLGQRLLPWMDRLSSEQLNPSVFVGLRLSSMQAGTKEDLYLHSLKIHYQQCLLRSTSSDDNSSCQPKLSGGSLALYLLALRANCEFFGSRKGDRLISQLKWFLEDEKKAIGHNHEGHPNTNYYQYGLSILALCVHQKRLHDSVVGKLLYAVEHDYFTYQGHVSVDTEAMAGLALTCLERFNFNSDLRPRITMAIETVREKILKSQAPEGYFGNIYSTPLALQMLMTSPASGVGLGTACIKAGTSLLLSLQDGAFQNPLMISQLLPILNHKTYLDLIFPDCQASRVMLVPAVEDPVHISEVISVTLKVASALSPYEQTFFVFAGSSLEDVLKLAQDGGGFTYGTQASLSGPYLTSVLGKDAGDREYWQLLRAPDTPLLQGIADYKPQDGETIELRLVRW</sequence>
<organism>
    <name type="scientific">Mus musculus</name>
    <name type="common">Mouse</name>
    <dbReference type="NCBI Taxonomy" id="10090"/>
    <lineage>
        <taxon>Eukaryota</taxon>
        <taxon>Metazoa</taxon>
        <taxon>Chordata</taxon>
        <taxon>Craniata</taxon>
        <taxon>Vertebrata</taxon>
        <taxon>Euteleostomi</taxon>
        <taxon>Mammalia</taxon>
        <taxon>Eutheria</taxon>
        <taxon>Euarchontoglires</taxon>
        <taxon>Glires</taxon>
        <taxon>Rodentia</taxon>
        <taxon>Myomorpha</taxon>
        <taxon>Muroidea</taxon>
        <taxon>Muridae</taxon>
        <taxon>Murinae</taxon>
        <taxon>Mus</taxon>
        <taxon>Mus</taxon>
    </lineage>
</organism>
<gene>
    <name type="primary">Tcn2</name>
</gene>
<dbReference type="EMBL" id="AF090686">
    <property type="protein sequence ID" value="AAC61868.1"/>
    <property type="molecule type" value="mRNA"/>
</dbReference>
<dbReference type="EMBL" id="AK133707">
    <property type="protein sequence ID" value="BAE21792.1"/>
    <property type="molecule type" value="mRNA"/>
</dbReference>
<dbReference type="EMBL" id="AK143761">
    <property type="protein sequence ID" value="BAE25528.1"/>
    <property type="molecule type" value="mRNA"/>
</dbReference>
<dbReference type="EMBL" id="AK147176">
    <property type="protein sequence ID" value="BAE27739.1"/>
    <property type="molecule type" value="mRNA"/>
</dbReference>
<dbReference type="EMBL" id="AK161618">
    <property type="protein sequence ID" value="BAE36496.1"/>
    <property type="molecule type" value="mRNA"/>
</dbReference>
<dbReference type="EMBL" id="AK170401">
    <property type="protein sequence ID" value="BAE41770.1"/>
    <property type="molecule type" value="mRNA"/>
</dbReference>
<dbReference type="EMBL" id="AL807241">
    <property type="status" value="NOT_ANNOTATED_CDS"/>
    <property type="molecule type" value="Genomic_DNA"/>
</dbReference>
<dbReference type="EMBL" id="AL807395">
    <property type="status" value="NOT_ANNOTATED_CDS"/>
    <property type="molecule type" value="Genomic_DNA"/>
</dbReference>
<dbReference type="EMBL" id="CH466574">
    <property type="protein sequence ID" value="EDL40449.1"/>
    <property type="molecule type" value="Genomic_DNA"/>
</dbReference>
<dbReference type="EMBL" id="BC003720">
    <property type="protein sequence ID" value="AAH03720.1"/>
    <property type="molecule type" value="mRNA"/>
</dbReference>
<dbReference type="CCDS" id="CCDS24371.1"/>
<dbReference type="RefSeq" id="NP_001123930.1">
    <property type="nucleotide sequence ID" value="NM_001130458.1"/>
</dbReference>
<dbReference type="RefSeq" id="NP_001123931.1">
    <property type="nucleotide sequence ID" value="NM_001130459.1"/>
</dbReference>
<dbReference type="RefSeq" id="NP_056564.1">
    <property type="nucleotide sequence ID" value="NM_015749.3"/>
</dbReference>
<dbReference type="RefSeq" id="XP_006514673.1">
    <property type="nucleotide sequence ID" value="XM_006514610.5"/>
</dbReference>
<dbReference type="RefSeq" id="XP_006514674.1">
    <property type="nucleotide sequence ID" value="XM_006514611.3"/>
</dbReference>
<dbReference type="RefSeq" id="XP_006514675.1">
    <property type="nucleotide sequence ID" value="XM_006514612.4"/>
</dbReference>
<dbReference type="RefSeq" id="XP_006514676.1">
    <property type="nucleotide sequence ID" value="XM_006514613.4"/>
</dbReference>
<dbReference type="SMR" id="O88968"/>
<dbReference type="BioGRID" id="204042">
    <property type="interactions" value="1"/>
</dbReference>
<dbReference type="FunCoup" id="O88968">
    <property type="interactions" value="128"/>
</dbReference>
<dbReference type="STRING" id="10090.ENSMUSP00000105620"/>
<dbReference type="CPTAC" id="non-CPTAC-3619"/>
<dbReference type="jPOST" id="O88968"/>
<dbReference type="PaxDb" id="10090-ENSMUSP00000105620"/>
<dbReference type="PeptideAtlas" id="O88968"/>
<dbReference type="ProteomicsDB" id="263262"/>
<dbReference type="Antibodypedia" id="206">
    <property type="antibodies" value="231 antibodies from 27 providers"/>
</dbReference>
<dbReference type="DNASU" id="21452"/>
<dbReference type="Ensembl" id="ENSMUST00000020710.11">
    <property type="protein sequence ID" value="ENSMUSP00000020710.5"/>
    <property type="gene ID" value="ENSMUSG00000020432.13"/>
</dbReference>
<dbReference type="Ensembl" id="ENSMUST00000109988.2">
    <property type="protein sequence ID" value="ENSMUSP00000105615.2"/>
    <property type="gene ID" value="ENSMUSG00000020432.13"/>
</dbReference>
<dbReference type="Ensembl" id="ENSMUST00000109989.10">
    <property type="protein sequence ID" value="ENSMUSP00000105616.4"/>
    <property type="gene ID" value="ENSMUSG00000020432.13"/>
</dbReference>
<dbReference type="Ensembl" id="ENSMUST00000109990.8">
    <property type="protein sequence ID" value="ENSMUSP00000105617.2"/>
    <property type="gene ID" value="ENSMUSG00000020432.13"/>
</dbReference>
<dbReference type="Ensembl" id="ENSMUST00000109991.8">
    <property type="protein sequence ID" value="ENSMUSP00000105618.2"/>
    <property type="gene ID" value="ENSMUSG00000020432.13"/>
</dbReference>
<dbReference type="Ensembl" id="ENSMUST00000109992.8">
    <property type="protein sequence ID" value="ENSMUSP00000105619.2"/>
    <property type="gene ID" value="ENSMUSG00000020432.13"/>
</dbReference>
<dbReference type="Ensembl" id="ENSMUST00000109993.9">
    <property type="protein sequence ID" value="ENSMUSP00000105620.3"/>
    <property type="gene ID" value="ENSMUSG00000020432.13"/>
</dbReference>
<dbReference type="GeneID" id="21452"/>
<dbReference type="KEGG" id="mmu:21452"/>
<dbReference type="UCSC" id="uc007htx.2">
    <property type="organism name" value="mouse"/>
</dbReference>
<dbReference type="AGR" id="MGI:98534"/>
<dbReference type="CTD" id="6948"/>
<dbReference type="MGI" id="MGI:98534">
    <property type="gene designation" value="Tcn2"/>
</dbReference>
<dbReference type="VEuPathDB" id="HostDB:ENSMUSG00000020432"/>
<dbReference type="eggNOG" id="ENOG502QSED">
    <property type="taxonomic scope" value="Eukaryota"/>
</dbReference>
<dbReference type="GeneTree" id="ENSGT00530000063370"/>
<dbReference type="HOGENOM" id="CLU_052188_1_0_1"/>
<dbReference type="InParanoid" id="O88968"/>
<dbReference type="OMA" id="QCVKDSG"/>
<dbReference type="OrthoDB" id="9440006at2759"/>
<dbReference type="PhylomeDB" id="O88968"/>
<dbReference type="TreeFam" id="TF333092"/>
<dbReference type="Reactome" id="R-MMU-9758890">
    <property type="pathway name" value="Transport of RCbl within the body"/>
</dbReference>
<dbReference type="BioGRID-ORCS" id="21452">
    <property type="hits" value="4 hits in 78 CRISPR screens"/>
</dbReference>
<dbReference type="ChiTaRS" id="Tcn2">
    <property type="organism name" value="mouse"/>
</dbReference>
<dbReference type="PRO" id="PR:O88968"/>
<dbReference type="Proteomes" id="UP000000589">
    <property type="component" value="Chromosome 11"/>
</dbReference>
<dbReference type="RNAct" id="O88968">
    <property type="molecule type" value="protein"/>
</dbReference>
<dbReference type="Bgee" id="ENSMUSG00000020432">
    <property type="expression patterns" value="Expressed in parotid gland and 270 other cell types or tissues"/>
</dbReference>
<dbReference type="GO" id="GO:0009897">
    <property type="term" value="C:external side of plasma membrane"/>
    <property type="evidence" value="ECO:0000314"/>
    <property type="project" value="MGI"/>
</dbReference>
<dbReference type="GO" id="GO:0005615">
    <property type="term" value="C:extracellular space"/>
    <property type="evidence" value="ECO:0000314"/>
    <property type="project" value="MGI"/>
</dbReference>
<dbReference type="GO" id="GO:0140355">
    <property type="term" value="F:cargo receptor ligand activity"/>
    <property type="evidence" value="ECO:0000314"/>
    <property type="project" value="MGI"/>
</dbReference>
<dbReference type="GO" id="GO:0031419">
    <property type="term" value="F:cobalamin binding"/>
    <property type="evidence" value="ECO:0000314"/>
    <property type="project" value="MGI"/>
</dbReference>
<dbReference type="GO" id="GO:0046872">
    <property type="term" value="F:metal ion binding"/>
    <property type="evidence" value="ECO:0007669"/>
    <property type="project" value="UniProtKB-KW"/>
</dbReference>
<dbReference type="GO" id="GO:0140104">
    <property type="term" value="F:molecular carrier activity"/>
    <property type="evidence" value="ECO:0000314"/>
    <property type="project" value="MGI"/>
</dbReference>
<dbReference type="GO" id="GO:0015889">
    <property type="term" value="P:cobalamin transport"/>
    <property type="evidence" value="ECO:0000314"/>
    <property type="project" value="MGI"/>
</dbReference>
<dbReference type="GO" id="GO:0006824">
    <property type="term" value="P:cobalt ion transport"/>
    <property type="evidence" value="ECO:0007669"/>
    <property type="project" value="UniProtKB-KW"/>
</dbReference>
<dbReference type="FunFam" id="1.50.10.20:FF:000013">
    <property type="entry name" value="Transcobalamin-2"/>
    <property type="match status" value="1"/>
</dbReference>
<dbReference type="Gene3D" id="1.50.10.20">
    <property type="match status" value="1"/>
</dbReference>
<dbReference type="Gene3D" id="2.170.130.30">
    <property type="match status" value="1"/>
</dbReference>
<dbReference type="InterPro" id="IPR002157">
    <property type="entry name" value="Cbl-bd_prot"/>
</dbReference>
<dbReference type="InterPro" id="IPR051588">
    <property type="entry name" value="Cobalamin_Transport"/>
</dbReference>
<dbReference type="PANTHER" id="PTHR10559">
    <property type="entry name" value="TRANSCOBALAMIN-1/GASTRIC INTRINSIC FACTOR"/>
    <property type="match status" value="1"/>
</dbReference>
<dbReference type="PANTHER" id="PTHR10559:SF14">
    <property type="entry name" value="TRANSCOBALAMIN-2"/>
    <property type="match status" value="1"/>
</dbReference>
<dbReference type="Pfam" id="PF01122">
    <property type="entry name" value="Cobalamin_bind"/>
    <property type="match status" value="1"/>
</dbReference>
<dbReference type="PROSITE" id="PS00468">
    <property type="entry name" value="COBALAMIN_BINDING"/>
    <property type="match status" value="1"/>
</dbReference>
<name>TCO2_MOUSE</name>
<keyword id="KW-0170">Cobalt</keyword>
<keyword id="KW-0171">Cobalt transport</keyword>
<keyword id="KW-1015">Disulfide bond</keyword>
<keyword id="KW-0406">Ion transport</keyword>
<keyword id="KW-0479">Metal-binding</keyword>
<keyword id="KW-1185">Reference proteome</keyword>
<keyword id="KW-0964">Secreted</keyword>
<keyword id="KW-0732">Signal</keyword>
<keyword id="KW-0813">Transport</keyword>
<proteinExistence type="evidence at protein level"/>
<feature type="signal peptide" evidence="1">
    <location>
        <begin position="1"/>
        <end position="18"/>
    </location>
</feature>
<feature type="chain" id="PRO_0000005565" description="Transcobalamin-2">
    <location>
        <begin position="19"/>
        <end position="430"/>
    </location>
</feature>
<feature type="binding site" evidence="1">
    <location>
        <begin position="152"/>
        <end position="156"/>
    </location>
    <ligand>
        <name>cob(II)alamin</name>
        <dbReference type="ChEBI" id="CHEBI:16304"/>
    </ligand>
</feature>
<feature type="binding site" evidence="1">
    <location>
        <begin position="193"/>
        <end position="197"/>
    </location>
    <ligand>
        <name>cob(II)alamin</name>
        <dbReference type="ChEBI" id="CHEBI:16304"/>
    </ligand>
</feature>
<feature type="binding site" description="axial binding residue" evidence="1">
    <location>
        <position position="193"/>
    </location>
    <ligand>
        <name>cob(II)alamin</name>
        <dbReference type="ChEBI" id="CHEBI:16304"/>
    </ligand>
    <ligandPart>
        <name>Co</name>
        <dbReference type="ChEBI" id="CHEBI:27638"/>
    </ligandPart>
</feature>
<feature type="binding site" evidence="1">
    <location>
        <position position="245"/>
    </location>
    <ligand>
        <name>cob(II)alamin</name>
        <dbReference type="ChEBI" id="CHEBI:16304"/>
    </ligand>
</feature>
<feature type="binding site" evidence="1">
    <location>
        <position position="248"/>
    </location>
    <ligand>
        <name>cob(II)alamin</name>
        <dbReference type="ChEBI" id="CHEBI:16304"/>
    </ligand>
</feature>
<feature type="binding site" evidence="1">
    <location>
        <position position="294"/>
    </location>
    <ligand>
        <name>cob(II)alamin</name>
        <dbReference type="ChEBI" id="CHEBI:16304"/>
    </ligand>
</feature>
<feature type="binding site" evidence="1">
    <location>
        <begin position="398"/>
        <end position="400"/>
    </location>
    <ligand>
        <name>cob(II)alamin</name>
        <dbReference type="ChEBI" id="CHEBI:16304"/>
    </ligand>
</feature>
<feature type="disulfide bond" evidence="1">
    <location>
        <begin position="21"/>
        <end position="270"/>
    </location>
</feature>
<feature type="disulfide bond" evidence="1">
    <location>
        <begin position="116"/>
        <end position="312"/>
    </location>
</feature>
<feature type="disulfide bond" evidence="1">
    <location>
        <begin position="165"/>
        <end position="208"/>
    </location>
</feature>
<feature type="sequence variant" description="In strain: NZB." evidence="3">
    <original>G</original>
    <variation>E</variation>
    <location>
        <position position="102"/>
    </location>
</feature>
<feature type="sequence conflict" description="In Ref. 2; BAE25528." evidence="4" ref="2">
    <original>E</original>
    <variation>G</variation>
    <location>
        <position position="19"/>
    </location>
</feature>
<feature type="sequence conflict" description="In Ref. 2; BAE41770." evidence="4" ref="2">
    <original>M</original>
    <variation>V</variation>
    <location>
        <position position="291"/>
    </location>
</feature>
<accession>O88968</accession>
<accession>Q3TD34</accession>
<accession>Q3UP69</accession>
<accession>Q5SQ21</accession>
<reference key="1">
    <citation type="submission" date="1998-09" db="EMBL/GenBank/DDBJ databases">
        <title>Mouse transcobalamin II: polymorphism in NZB.</title>
        <authorList>
            <person name="Hasegawa M."/>
            <person name="Foote S."/>
        </authorList>
    </citation>
    <scope>NUCLEOTIDE SEQUENCE [MRNA]</scope>
    <scope>VARIANT GLU-102</scope>
    <source>
        <strain>BALB/cJ</strain>
        <strain>NZB</strain>
        <tissue>Liver</tissue>
    </source>
</reference>
<reference key="2">
    <citation type="journal article" date="2005" name="Science">
        <title>The transcriptional landscape of the mammalian genome.</title>
        <authorList>
            <person name="Carninci P."/>
            <person name="Kasukawa T."/>
            <person name="Katayama S."/>
            <person name="Gough J."/>
            <person name="Frith M.C."/>
            <person name="Maeda N."/>
            <person name="Oyama R."/>
            <person name="Ravasi T."/>
            <person name="Lenhard B."/>
            <person name="Wells C."/>
            <person name="Kodzius R."/>
            <person name="Shimokawa K."/>
            <person name="Bajic V.B."/>
            <person name="Brenner S.E."/>
            <person name="Batalov S."/>
            <person name="Forrest A.R."/>
            <person name="Zavolan M."/>
            <person name="Davis M.J."/>
            <person name="Wilming L.G."/>
            <person name="Aidinis V."/>
            <person name="Allen J.E."/>
            <person name="Ambesi-Impiombato A."/>
            <person name="Apweiler R."/>
            <person name="Aturaliya R.N."/>
            <person name="Bailey T.L."/>
            <person name="Bansal M."/>
            <person name="Baxter L."/>
            <person name="Beisel K.W."/>
            <person name="Bersano T."/>
            <person name="Bono H."/>
            <person name="Chalk A.M."/>
            <person name="Chiu K.P."/>
            <person name="Choudhary V."/>
            <person name="Christoffels A."/>
            <person name="Clutterbuck D.R."/>
            <person name="Crowe M.L."/>
            <person name="Dalla E."/>
            <person name="Dalrymple B.P."/>
            <person name="de Bono B."/>
            <person name="Della Gatta G."/>
            <person name="di Bernardo D."/>
            <person name="Down T."/>
            <person name="Engstrom P."/>
            <person name="Fagiolini M."/>
            <person name="Faulkner G."/>
            <person name="Fletcher C.F."/>
            <person name="Fukushima T."/>
            <person name="Furuno M."/>
            <person name="Futaki S."/>
            <person name="Gariboldi M."/>
            <person name="Georgii-Hemming P."/>
            <person name="Gingeras T.R."/>
            <person name="Gojobori T."/>
            <person name="Green R.E."/>
            <person name="Gustincich S."/>
            <person name="Harbers M."/>
            <person name="Hayashi Y."/>
            <person name="Hensch T.K."/>
            <person name="Hirokawa N."/>
            <person name="Hill D."/>
            <person name="Huminiecki L."/>
            <person name="Iacono M."/>
            <person name="Ikeo K."/>
            <person name="Iwama A."/>
            <person name="Ishikawa T."/>
            <person name="Jakt M."/>
            <person name="Kanapin A."/>
            <person name="Katoh M."/>
            <person name="Kawasawa Y."/>
            <person name="Kelso J."/>
            <person name="Kitamura H."/>
            <person name="Kitano H."/>
            <person name="Kollias G."/>
            <person name="Krishnan S.P."/>
            <person name="Kruger A."/>
            <person name="Kummerfeld S.K."/>
            <person name="Kurochkin I.V."/>
            <person name="Lareau L.F."/>
            <person name="Lazarevic D."/>
            <person name="Lipovich L."/>
            <person name="Liu J."/>
            <person name="Liuni S."/>
            <person name="McWilliam S."/>
            <person name="Madan Babu M."/>
            <person name="Madera M."/>
            <person name="Marchionni L."/>
            <person name="Matsuda H."/>
            <person name="Matsuzawa S."/>
            <person name="Miki H."/>
            <person name="Mignone F."/>
            <person name="Miyake S."/>
            <person name="Morris K."/>
            <person name="Mottagui-Tabar S."/>
            <person name="Mulder N."/>
            <person name="Nakano N."/>
            <person name="Nakauchi H."/>
            <person name="Ng P."/>
            <person name="Nilsson R."/>
            <person name="Nishiguchi S."/>
            <person name="Nishikawa S."/>
            <person name="Nori F."/>
            <person name="Ohara O."/>
            <person name="Okazaki Y."/>
            <person name="Orlando V."/>
            <person name="Pang K.C."/>
            <person name="Pavan W.J."/>
            <person name="Pavesi G."/>
            <person name="Pesole G."/>
            <person name="Petrovsky N."/>
            <person name="Piazza S."/>
            <person name="Reed J."/>
            <person name="Reid J.F."/>
            <person name="Ring B.Z."/>
            <person name="Ringwald M."/>
            <person name="Rost B."/>
            <person name="Ruan Y."/>
            <person name="Salzberg S.L."/>
            <person name="Sandelin A."/>
            <person name="Schneider C."/>
            <person name="Schoenbach C."/>
            <person name="Sekiguchi K."/>
            <person name="Semple C.A."/>
            <person name="Seno S."/>
            <person name="Sessa L."/>
            <person name="Sheng Y."/>
            <person name="Shibata Y."/>
            <person name="Shimada H."/>
            <person name="Shimada K."/>
            <person name="Silva D."/>
            <person name="Sinclair B."/>
            <person name="Sperling S."/>
            <person name="Stupka E."/>
            <person name="Sugiura K."/>
            <person name="Sultana R."/>
            <person name="Takenaka Y."/>
            <person name="Taki K."/>
            <person name="Tammoja K."/>
            <person name="Tan S.L."/>
            <person name="Tang S."/>
            <person name="Taylor M.S."/>
            <person name="Tegner J."/>
            <person name="Teichmann S.A."/>
            <person name="Ueda H.R."/>
            <person name="van Nimwegen E."/>
            <person name="Verardo R."/>
            <person name="Wei C.L."/>
            <person name="Yagi K."/>
            <person name="Yamanishi H."/>
            <person name="Zabarovsky E."/>
            <person name="Zhu S."/>
            <person name="Zimmer A."/>
            <person name="Hide W."/>
            <person name="Bult C."/>
            <person name="Grimmond S.M."/>
            <person name="Teasdale R.D."/>
            <person name="Liu E.T."/>
            <person name="Brusic V."/>
            <person name="Quackenbush J."/>
            <person name="Wahlestedt C."/>
            <person name="Mattick J.S."/>
            <person name="Hume D.A."/>
            <person name="Kai C."/>
            <person name="Sasaki D."/>
            <person name="Tomaru Y."/>
            <person name="Fukuda S."/>
            <person name="Kanamori-Katayama M."/>
            <person name="Suzuki M."/>
            <person name="Aoki J."/>
            <person name="Arakawa T."/>
            <person name="Iida J."/>
            <person name="Imamura K."/>
            <person name="Itoh M."/>
            <person name="Kato T."/>
            <person name="Kawaji H."/>
            <person name="Kawagashira N."/>
            <person name="Kawashima T."/>
            <person name="Kojima M."/>
            <person name="Kondo S."/>
            <person name="Konno H."/>
            <person name="Nakano K."/>
            <person name="Ninomiya N."/>
            <person name="Nishio T."/>
            <person name="Okada M."/>
            <person name="Plessy C."/>
            <person name="Shibata K."/>
            <person name="Shiraki T."/>
            <person name="Suzuki S."/>
            <person name="Tagami M."/>
            <person name="Waki K."/>
            <person name="Watahiki A."/>
            <person name="Okamura-Oho Y."/>
            <person name="Suzuki H."/>
            <person name="Kawai J."/>
            <person name="Hayashizaki Y."/>
        </authorList>
    </citation>
    <scope>NUCLEOTIDE SEQUENCE [LARGE SCALE MRNA]</scope>
    <source>
        <strain>C57BL/6J</strain>
        <strain>NOD</strain>
        <tissue>Head</tissue>
        <tissue>Kidney</tissue>
        <tissue>Spleen</tissue>
    </source>
</reference>
<reference key="3">
    <citation type="journal article" date="2009" name="PLoS Biol.">
        <title>Lineage-specific biology revealed by a finished genome assembly of the mouse.</title>
        <authorList>
            <person name="Church D.M."/>
            <person name="Goodstadt L."/>
            <person name="Hillier L.W."/>
            <person name="Zody M.C."/>
            <person name="Goldstein S."/>
            <person name="She X."/>
            <person name="Bult C.J."/>
            <person name="Agarwala R."/>
            <person name="Cherry J.L."/>
            <person name="DiCuccio M."/>
            <person name="Hlavina W."/>
            <person name="Kapustin Y."/>
            <person name="Meric P."/>
            <person name="Maglott D."/>
            <person name="Birtle Z."/>
            <person name="Marques A.C."/>
            <person name="Graves T."/>
            <person name="Zhou S."/>
            <person name="Teague B."/>
            <person name="Potamousis K."/>
            <person name="Churas C."/>
            <person name="Place M."/>
            <person name="Herschleb J."/>
            <person name="Runnheim R."/>
            <person name="Forrest D."/>
            <person name="Amos-Landgraf J."/>
            <person name="Schwartz D.C."/>
            <person name="Cheng Z."/>
            <person name="Lindblad-Toh K."/>
            <person name="Eichler E.E."/>
            <person name="Ponting C.P."/>
        </authorList>
    </citation>
    <scope>NUCLEOTIDE SEQUENCE [LARGE SCALE GENOMIC DNA]</scope>
    <source>
        <strain>C57BL/6J</strain>
    </source>
</reference>
<reference key="4">
    <citation type="submission" date="2005-07" db="EMBL/GenBank/DDBJ databases">
        <authorList>
            <person name="Mural R.J."/>
            <person name="Adams M.D."/>
            <person name="Myers E.W."/>
            <person name="Smith H.O."/>
            <person name="Venter J.C."/>
        </authorList>
    </citation>
    <scope>NUCLEOTIDE SEQUENCE [LARGE SCALE GENOMIC DNA]</scope>
</reference>
<reference key="5">
    <citation type="journal article" date="2004" name="Genome Res.">
        <title>The status, quality, and expansion of the NIH full-length cDNA project: the Mammalian Gene Collection (MGC).</title>
        <authorList>
            <consortium name="The MGC Project Team"/>
        </authorList>
    </citation>
    <scope>NUCLEOTIDE SEQUENCE [LARGE SCALE MRNA]</scope>
</reference>
<reference key="6">
    <citation type="journal article" date="2010" name="Cell">
        <title>A tissue-specific atlas of mouse protein phosphorylation and expression.</title>
        <authorList>
            <person name="Huttlin E.L."/>
            <person name="Jedrychowski M.P."/>
            <person name="Elias J.E."/>
            <person name="Goswami T."/>
            <person name="Rad R."/>
            <person name="Beausoleil S.A."/>
            <person name="Villen J."/>
            <person name="Haas W."/>
            <person name="Sowa M.E."/>
            <person name="Gygi S.P."/>
        </authorList>
    </citation>
    <scope>IDENTIFICATION BY MASS SPECTROMETRY [LARGE SCALE ANALYSIS]</scope>
    <source>
        <tissue>Kidney</tissue>
        <tissue>Lung</tissue>
    </source>
</reference>
<evidence type="ECO:0000250" key="1"/>
<evidence type="ECO:0000250" key="2">
    <source>
        <dbReference type="UniProtKB" id="P20062"/>
    </source>
</evidence>
<evidence type="ECO:0000269" key="3">
    <source ref="1"/>
</evidence>
<evidence type="ECO:0000305" key="4"/>
<comment type="function">
    <text evidence="2">Primary vitamin B12-binding and transport protein. Delivers cobalamin to cells.</text>
</comment>
<comment type="subunit">
    <text evidence="2">Interacts with CD320 (via LDL-receptor class A domains).</text>
</comment>
<comment type="subcellular location">
    <subcellularLocation>
        <location evidence="2">Secreted</location>
    </subcellularLocation>
</comment>
<comment type="similarity">
    <text evidence="4">Belongs to the eukaryotic cobalamin transport proteins family.</text>
</comment>